<sequence length="229" mass="26875">MKAIILAAGLGTRLRPMTENTPKALVQVNQKPLIEYQIEFLKEKGINDIIIIVGYLKEQFDYLKEKYGVRLVFNDKYADYNNFYSLYLVKEELANSYVIDADNYLFKNMFRNDLTRSTYFSVYREDCTNEWFLVYGDDYKVQDIIVDSKAGRILSGVSFWDAPTAEKIVSFIDKAYASGEFVDLYWDNMVKDNIKELDVYVEELEGNSIYEIDSVQDYRKLEEILKNEN</sequence>
<reference key="1">
    <citation type="journal article" date="2001" name="Biochim. Biophys. Acta">
        <title>The CTP:phosphocholine cytidylyltransferase encoded by the licC gene of Streptococcus pneumoniae: cloning, expression, purification, and characterization.</title>
        <authorList>
            <person name="Campbell H.A."/>
            <person name="Kent C."/>
        </authorList>
    </citation>
    <scope>NUCLEOTIDE SEQUENCE [GENOMIC DNA]</scope>
    <scope>FUNCTION</scope>
    <scope>CATALYTIC ACTIVITY</scope>
    <scope>ACTIVITY REGULATION</scope>
    <scope>BIOPHYSICOCHEMICAL PROPERTIES</scope>
    <scope>SUBUNIT</scope>
    <source>
        <strain>R36A</strain>
    </source>
</reference>
<reference key="2">
    <citation type="journal article" date="2001" name="J. Bacteriol.">
        <title>Genome of the bacterium Streptococcus pneumoniae strain R6.</title>
        <authorList>
            <person name="Hoskins J."/>
            <person name="Alborn W.E. Jr."/>
            <person name="Arnold J."/>
            <person name="Blaszczak L.C."/>
            <person name="Burgett S."/>
            <person name="DeHoff B.S."/>
            <person name="Estrem S.T."/>
            <person name="Fritz L."/>
            <person name="Fu D.-J."/>
            <person name="Fuller W."/>
            <person name="Geringer C."/>
            <person name="Gilmour R."/>
            <person name="Glass J.S."/>
            <person name="Khoja H."/>
            <person name="Kraft A.R."/>
            <person name="Lagace R.E."/>
            <person name="LeBlanc D.J."/>
            <person name="Lee L.N."/>
            <person name="Lefkowitz E.J."/>
            <person name="Lu J."/>
            <person name="Matsushima P."/>
            <person name="McAhren S.M."/>
            <person name="McHenney M."/>
            <person name="McLeaster K."/>
            <person name="Mundy C.W."/>
            <person name="Nicas T.I."/>
            <person name="Norris F.H."/>
            <person name="O'Gara M."/>
            <person name="Peery R.B."/>
            <person name="Robertson G.T."/>
            <person name="Rockey P."/>
            <person name="Sun P.-M."/>
            <person name="Winkler M.E."/>
            <person name="Yang Y."/>
            <person name="Young-Bellido M."/>
            <person name="Zhao G."/>
            <person name="Zook C.A."/>
            <person name="Baltz R.H."/>
            <person name="Jaskunas S.R."/>
            <person name="Rosteck P.R. Jr."/>
            <person name="Skatrud P.L."/>
            <person name="Glass J.I."/>
        </authorList>
    </citation>
    <scope>NUCLEOTIDE SEQUENCE [LARGE SCALE GENOMIC DNA]</scope>
    <source>
        <strain>ATCC BAA-255 / R6</strain>
    </source>
</reference>
<reference key="3">
    <citation type="journal article" date="1996" name="FEMS Microbiol. Lett.">
        <title>Investigation of a choline phosphate synthesis pathway in Streptococcus pneumoniae: evidence for choline phosphate cytidylyltransferase activity.</title>
        <authorList>
            <person name="Whiting G.C."/>
            <person name="Gillespie S.H."/>
        </authorList>
    </citation>
    <scope>FUNCTION</scope>
    <scope>CATALYTIC ACTIVITY</scope>
    <source>
        <strain>R36A</strain>
    </source>
</reference>
<reference key="4">
    <citation type="journal article" date="2001" name="J. Bacteriol.">
        <title>The licC gene of Streptococcus pneumoniae encodes a CTP:phosphocholine cytidylyltransferase.</title>
        <authorList>
            <person name="Rock C.O."/>
            <person name="Heath R.J."/>
            <person name="Park H.W."/>
            <person name="Jackowski S."/>
        </authorList>
    </citation>
    <scope>FUNCTION</scope>
    <scope>CATALYTIC ACTIVITY</scope>
    <scope>BIOPHYSICOCHEMICAL PROPERTIES</scope>
    <scope>SUBUNIT</scope>
</reference>
<reference key="5">
    <citation type="journal article" date="2019" name="Nat. Commun.">
        <title>The predominance of nucleotidyl activation in bacterial phosphonate biosynthesis.</title>
        <authorList>
            <person name="Rice K."/>
            <person name="Batul K."/>
            <person name="Whiteside J."/>
            <person name="Kelso J."/>
            <person name="Papinski M."/>
            <person name="Schmidt E."/>
            <person name="Pratasouskaya A."/>
            <person name="Wang D."/>
            <person name="Sullivan R."/>
            <person name="Bartlett C."/>
            <person name="Weadge J.T."/>
            <person name="Van der Kamp M.W."/>
            <person name="Moreno-Hagelsieb G."/>
            <person name="Suits M.D."/>
            <person name="Horsman G.P."/>
        </authorList>
    </citation>
    <scope>FUNCTION</scope>
    <scope>CATALYTIC ACTIVITY</scope>
    <scope>BIOPHYSICOCHEMICAL PROPERTIES</scope>
    <scope>SUBUNIT</scope>
</reference>
<reference evidence="15 16" key="6">
    <citation type="journal article" date="2002" name="J. Biol. Chem.">
        <title>Structure and mechanism of CTP:phosphocholine cytidylyltransferase (LicC) from Streptococcus pneumoniae.</title>
        <authorList>
            <person name="Kwak B.Y."/>
            <person name="Zhang Y.M."/>
            <person name="Yun M."/>
            <person name="Heath R.J."/>
            <person name="Rock C.O."/>
            <person name="Jackowski S."/>
            <person name="Park H.W."/>
        </authorList>
    </citation>
    <scope>X-RAY CRYSTALLOGRAPHY (1.50 ANGSTROMS) OF 2-229 OF APOENZYME AND IN COMPLEX WITH CDP-CHOLINE AND MAGNESIUM</scope>
    <scope>FUNCTION</scope>
    <scope>CATALYTIC ACTIVITY</scope>
    <scope>COFACTOR</scope>
    <scope>ACTIVITY REGULATION</scope>
    <scope>SUBUNIT</scope>
    <scope>DOMAIN</scope>
</reference>
<feature type="chain" id="PRO_0000459654" description="Choline-phosphate cytidylyltransferase">
    <location>
        <begin position="1"/>
        <end position="229"/>
    </location>
</feature>
<feature type="binding site" evidence="2 16">
    <location>
        <position position="6"/>
    </location>
    <ligand>
        <name>CDP-choline</name>
        <dbReference type="ChEBI" id="CHEBI:58779"/>
    </ligand>
</feature>
<feature type="binding site" evidence="2 16">
    <location>
        <position position="8"/>
    </location>
    <ligand>
        <name>CDP-choline</name>
        <dbReference type="ChEBI" id="CHEBI:58779"/>
    </ligand>
</feature>
<feature type="binding site" evidence="2 16">
    <location>
        <position position="9"/>
    </location>
    <ligand>
        <name>CDP-choline</name>
        <dbReference type="ChEBI" id="CHEBI:58779"/>
    </ligand>
</feature>
<feature type="binding site" evidence="2 16">
    <location>
        <position position="80"/>
    </location>
    <ligand>
        <name>CDP-choline</name>
        <dbReference type="ChEBI" id="CHEBI:58779"/>
    </ligand>
</feature>
<feature type="binding site" evidence="2 16">
    <location>
        <position position="82"/>
    </location>
    <ligand>
        <name>CDP-choline</name>
        <dbReference type="ChEBI" id="CHEBI:58779"/>
    </ligand>
</feature>
<feature type="binding site" evidence="2 16">
    <location>
        <position position="85"/>
    </location>
    <ligand>
        <name>CDP-choline</name>
        <dbReference type="ChEBI" id="CHEBI:58779"/>
    </ligand>
</feature>
<feature type="binding site" evidence="2 16">
    <location>
        <position position="101"/>
    </location>
    <ligand>
        <name>CDP-choline</name>
        <dbReference type="ChEBI" id="CHEBI:58779"/>
    </ligand>
</feature>
<feature type="binding site" evidence="2 16">
    <location>
        <position position="102"/>
    </location>
    <ligand>
        <name>Mg(2+)</name>
        <dbReference type="ChEBI" id="CHEBI:18420"/>
    </ligand>
</feature>
<feature type="binding site" evidence="2 16">
    <location>
        <position position="185"/>
    </location>
    <ligand>
        <name>CDP-choline</name>
        <dbReference type="ChEBI" id="CHEBI:58779"/>
    </ligand>
</feature>
<feature type="binding site" evidence="2 16">
    <location>
        <position position="211"/>
    </location>
    <ligand>
        <name>Mg(2+)</name>
        <dbReference type="ChEBI" id="CHEBI:18420"/>
    </ligand>
</feature>
<feature type="binding site" evidence="2 16">
    <location>
        <position position="213"/>
    </location>
    <ligand>
        <name>Mg(2+)</name>
        <dbReference type="ChEBI" id="CHEBI:18420"/>
    </ligand>
</feature>
<feature type="strand" evidence="17">
    <location>
        <begin position="2"/>
        <end position="7"/>
    </location>
</feature>
<feature type="helix" evidence="17">
    <location>
        <begin position="12"/>
        <end position="14"/>
    </location>
</feature>
<feature type="turn" evidence="17">
    <location>
        <begin position="15"/>
        <end position="18"/>
    </location>
</feature>
<feature type="strand" evidence="17">
    <location>
        <begin position="19"/>
        <end position="21"/>
    </location>
</feature>
<feature type="helix" evidence="17">
    <location>
        <begin position="23"/>
        <end position="25"/>
    </location>
</feature>
<feature type="strand" evidence="18">
    <location>
        <begin position="27"/>
        <end position="32"/>
    </location>
</feature>
<feature type="helix" evidence="17">
    <location>
        <begin position="33"/>
        <end position="43"/>
    </location>
</feature>
<feature type="strand" evidence="17">
    <location>
        <begin position="49"/>
        <end position="53"/>
    </location>
</feature>
<feature type="helix" evidence="17">
    <location>
        <begin position="57"/>
        <end position="62"/>
    </location>
</feature>
<feature type="helix" evidence="17">
    <location>
        <begin position="63"/>
        <end position="67"/>
    </location>
</feature>
<feature type="strand" evidence="17">
    <location>
        <begin position="70"/>
        <end position="73"/>
    </location>
</feature>
<feature type="turn" evidence="17">
    <location>
        <begin position="75"/>
        <end position="79"/>
    </location>
</feature>
<feature type="helix" evidence="17">
    <location>
        <begin position="83"/>
        <end position="87"/>
    </location>
</feature>
<feature type="helix" evidence="17">
    <location>
        <begin position="88"/>
        <end position="92"/>
    </location>
</feature>
<feature type="strand" evidence="17">
    <location>
        <begin position="96"/>
        <end position="100"/>
    </location>
</feature>
<feature type="strand" evidence="17">
    <location>
        <begin position="103"/>
        <end position="107"/>
    </location>
</feature>
<feature type="strand" evidence="17">
    <location>
        <begin position="116"/>
        <end position="121"/>
    </location>
</feature>
<feature type="strand" evidence="17">
    <location>
        <begin position="123"/>
        <end position="126"/>
    </location>
</feature>
<feature type="strand" evidence="17">
    <location>
        <begin position="132"/>
        <end position="135"/>
    </location>
</feature>
<feature type="strand" evidence="17">
    <location>
        <begin position="140"/>
        <end position="145"/>
    </location>
</feature>
<feature type="strand" evidence="17">
    <location>
        <begin position="149"/>
        <end position="153"/>
    </location>
</feature>
<feature type="strand" evidence="17">
    <location>
        <begin position="156"/>
        <end position="160"/>
    </location>
</feature>
<feature type="helix" evidence="17">
    <location>
        <begin position="162"/>
        <end position="176"/>
    </location>
</feature>
<feature type="turn" evidence="17">
    <location>
        <begin position="177"/>
        <end position="179"/>
    </location>
</feature>
<feature type="helix" evidence="17">
    <location>
        <begin position="188"/>
        <end position="191"/>
    </location>
</feature>
<feature type="helix" evidence="17">
    <location>
        <begin position="192"/>
        <end position="196"/>
    </location>
</feature>
<feature type="strand" evidence="17">
    <location>
        <begin position="199"/>
        <end position="203"/>
    </location>
</feature>
<feature type="strand" evidence="17">
    <location>
        <begin position="208"/>
        <end position="211"/>
    </location>
</feature>
<feature type="helix" evidence="17">
    <location>
        <begin position="215"/>
        <end position="225"/>
    </location>
</feature>
<organism>
    <name type="scientific">Streptococcus pneumoniae (strain ATCC BAA-255 / R6)</name>
    <dbReference type="NCBI Taxonomy" id="171101"/>
    <lineage>
        <taxon>Bacteria</taxon>
        <taxon>Bacillati</taxon>
        <taxon>Bacillota</taxon>
        <taxon>Bacilli</taxon>
        <taxon>Lactobacillales</taxon>
        <taxon>Streptococcaceae</taxon>
        <taxon>Streptococcus</taxon>
    </lineage>
</organism>
<accession>Q8DPI6</accession>
<name>LICC_STRR6</name>
<evidence type="ECO:0000269" key="1">
    <source>
    </source>
</evidence>
<evidence type="ECO:0000269" key="2">
    <source>
    </source>
</evidence>
<evidence type="ECO:0000269" key="3">
    <source>
    </source>
</evidence>
<evidence type="ECO:0000269" key="4">
    <source>
    </source>
</evidence>
<evidence type="ECO:0000269" key="5">
    <source>
    </source>
</evidence>
<evidence type="ECO:0000303" key="6">
    <source>
    </source>
</evidence>
<evidence type="ECO:0000303" key="7">
    <source>
    </source>
</evidence>
<evidence type="ECO:0000303" key="8">
    <source>
    </source>
</evidence>
<evidence type="ECO:0000303" key="9">
    <source>
    </source>
</evidence>
<evidence type="ECO:0000305" key="10"/>
<evidence type="ECO:0000305" key="11">
    <source>
    </source>
</evidence>
<evidence type="ECO:0000305" key="12">
    <source>
    </source>
</evidence>
<evidence type="ECO:0000305" key="13">
    <source>
    </source>
</evidence>
<evidence type="ECO:0000312" key="14">
    <source>
        <dbReference type="EMBL" id="AAK99948.1"/>
    </source>
</evidence>
<evidence type="ECO:0007744" key="15">
    <source>
        <dbReference type="PDB" id="1JYK"/>
    </source>
</evidence>
<evidence type="ECO:0007744" key="16">
    <source>
        <dbReference type="PDB" id="1JYL"/>
    </source>
</evidence>
<evidence type="ECO:0007829" key="17">
    <source>
        <dbReference type="PDB" id="1JYK"/>
    </source>
</evidence>
<evidence type="ECO:0007829" key="18">
    <source>
        <dbReference type="PDB" id="1JYL"/>
    </source>
</evidence>
<comment type="function">
    <text evidence="1 2 3 4 5">Cytidylyltransferase involved in the biosynthesis of the phosphocholine containing cell wall constituents, teichoic acid and lipoteichoic acid, which are essential for cell separation and pathogenesis (PubMed:8837483). Catalyzes the activation of phosphocholine (P-Cho) to CDP-choline (CDP-Cho) (PubMed:11466299, PubMed:11706035, PubMed:11786295, PubMed:31420548, PubMed:8837483). Can also use phosphoethanolamine and 2-aminoethylphosphonate, with much lower efficiency (PubMed:11466299, PubMed:31420548). Shows lower activity with dCTP, weak activity with ATP and no activity with GTP, TTP, UTP, dATP, dGTP and dTTP (PubMed:11466299, PubMed:11786295).</text>
</comment>
<comment type="catalytic activity">
    <reaction evidence="1 2 3 4 5">
        <text>phosphocholine + CTP + H(+) = CDP-choline + diphosphate</text>
        <dbReference type="Rhea" id="RHEA:18997"/>
        <dbReference type="ChEBI" id="CHEBI:15378"/>
        <dbReference type="ChEBI" id="CHEBI:33019"/>
        <dbReference type="ChEBI" id="CHEBI:37563"/>
        <dbReference type="ChEBI" id="CHEBI:58779"/>
        <dbReference type="ChEBI" id="CHEBI:295975"/>
        <dbReference type="EC" id="2.7.7.15"/>
    </reaction>
    <physiologicalReaction direction="left-to-right" evidence="1 3 4 5">
        <dbReference type="Rhea" id="RHEA:18998"/>
    </physiologicalReaction>
</comment>
<comment type="cofactor">
    <cofactor evidence="2 11 12">
        <name>Mg(2+)</name>
        <dbReference type="ChEBI" id="CHEBI:18420"/>
    </cofactor>
    <text evidence="2">Kinetic data and structures suggest that the magnesium ion plays a direct role in catalysis.</text>
</comment>
<comment type="activity regulation">
    <text evidence="2 3">Mg(2+) in slight excess of CTP gives maximal activity (PubMed:11786295). Strongly inhibited by Ca(2+) and several other metal ions, such as Cd(2+), Co(2+), Cu(2+), Mn(2+), Ni(2+), Zn(2+) and Fe(2+) (PubMed:11786295). Also inhibited by Mg(2+) at high concentrations (PubMed:11786295). CDP-Cho is a competitive inhibitor with respect to CTP, whereas diphosphate is a mixed-type inhibitor with respect to CTP (PubMed:11706035).</text>
</comment>
<comment type="biophysicochemical properties">
    <kinetics>
        <KM evidence="1">83 uM for phosphocholine</KM>
        <KM evidence="3">390 uM for phosphocholine</KM>
        <KM evidence="4">2.4 uM for phosphocholine</KM>
        <KM evidence="1">133 uM for CTP</KM>
        <KM evidence="3">890 uM for CTP</KM>
        <KM evidence="1">1.43 mM for phosphoethanolamine</KM>
        <KM evidence="4">300 uM for 2-aminoethylphosphonate</KM>
        <Vmax evidence="1">7.7 umol/min/mg enzyme with phosphocholine or CTP as substrate</Vmax>
        <Vmax evidence="1">0.06 umol/min/mg enzyme with phosphoethanolamine as substrate</Vmax>
        <Vmax evidence="3">39.1 umol/min/mg enzyme</Vmax>
        <text evidence="3 4">kcat is 17.5 sec(-1) with phosphocholine as substrate (PubMed:11786295). kcat is 1.06 sec(-1) with phosphocholine as substrate. kcat is 0.72 sec(-1) with 2-aminoethylphosphonate as substrate (PubMed:31420548).</text>
    </kinetics>
    <phDependence>
        <text evidence="3">Maximally active in neutral and alkaline conditions.</text>
    </phDependence>
</comment>
<comment type="pathway">
    <text evidence="13">Cell wall biogenesis; teichoic acid biosynthesis.</text>
</comment>
<comment type="pathway">
    <text evidence="13">Cell wall biogenesis; lipoteichoic acid biosynthesis.</text>
</comment>
<comment type="subunit">
    <text evidence="1 2 3 4">Monomer (PubMed:11466299, PubMed:11706035, PubMed:11786295, PubMed:31420548). Forms dimers in LicC-CDP-Cho-Mg(2+) crystals, but the monomer is probably the biologically functional unit (PubMed:11706035).</text>
</comment>
<comment type="domain">
    <text evidence="2">The structures of apo-LicC and the LicC-CDP-choline-Mg(2+) ternary complex show a significant conformational change driven by the multivalent coordination of Mg(2+).</text>
</comment>
<comment type="similarity">
    <text evidence="10">Belongs to the LicC/PntC cytidylyltransferase family.</text>
</comment>
<dbReference type="EC" id="2.7.7.15" evidence="1 2 3 4 5"/>
<dbReference type="EMBL" id="AF402777">
    <property type="protein sequence ID" value="AAK94072.1"/>
    <property type="molecule type" value="Genomic_DNA"/>
</dbReference>
<dbReference type="EMBL" id="AE007317">
    <property type="protein sequence ID" value="AAK99948.1"/>
    <property type="molecule type" value="Genomic_DNA"/>
</dbReference>
<dbReference type="PIR" id="H98014">
    <property type="entry name" value="H98014"/>
</dbReference>
<dbReference type="RefSeq" id="NP_358738.1">
    <property type="nucleotide sequence ID" value="NC_003098.1"/>
</dbReference>
<dbReference type="RefSeq" id="WP_000643970.1">
    <property type="nucleotide sequence ID" value="NC_003098.1"/>
</dbReference>
<dbReference type="PDB" id="1JYK">
    <property type="method" value="X-ray"/>
    <property type="resolution" value="1.50 A"/>
    <property type="chains" value="A=2-229"/>
</dbReference>
<dbReference type="PDB" id="1JYL">
    <property type="method" value="X-ray"/>
    <property type="resolution" value="2.40 A"/>
    <property type="chains" value="A/B/C/D=2-229"/>
</dbReference>
<dbReference type="PDBsum" id="1JYK"/>
<dbReference type="PDBsum" id="1JYL"/>
<dbReference type="SMR" id="Q8DPI6"/>
<dbReference type="STRING" id="171101.spr1145"/>
<dbReference type="KEGG" id="spr:spr1145"/>
<dbReference type="PATRIC" id="fig|171101.6.peg.1243"/>
<dbReference type="eggNOG" id="COG4750">
    <property type="taxonomic scope" value="Bacteria"/>
</dbReference>
<dbReference type="HOGENOM" id="CLU_029499_5_2_9"/>
<dbReference type="BioCyc" id="MetaCyc:MONOMER-20025"/>
<dbReference type="UniPathway" id="UPA00556"/>
<dbReference type="UniPathway" id="UPA00632"/>
<dbReference type="Proteomes" id="UP000000586">
    <property type="component" value="Chromosome"/>
</dbReference>
<dbReference type="GO" id="GO:0016779">
    <property type="term" value="F:nucleotidyltransferase activity"/>
    <property type="evidence" value="ECO:0007669"/>
    <property type="project" value="UniProtKB-KW"/>
</dbReference>
<dbReference type="GO" id="GO:0071555">
    <property type="term" value="P:cell wall organization"/>
    <property type="evidence" value="ECO:0007669"/>
    <property type="project" value="UniProtKB-KW"/>
</dbReference>
<dbReference type="GO" id="GO:0070395">
    <property type="term" value="P:lipoteichoic acid biosynthetic process"/>
    <property type="evidence" value="ECO:0007669"/>
    <property type="project" value="UniProtKB-UniPathway"/>
</dbReference>
<dbReference type="CDD" id="cd02523">
    <property type="entry name" value="PC_cytidylyltransferase"/>
    <property type="match status" value="1"/>
</dbReference>
<dbReference type="Gene3D" id="3.90.550.10">
    <property type="entry name" value="Spore Coat Polysaccharide Biosynthesis Protein SpsA, Chain A"/>
    <property type="match status" value="1"/>
</dbReference>
<dbReference type="InterPro" id="IPR017189">
    <property type="entry name" value="CTP-phospocholine_CTT"/>
</dbReference>
<dbReference type="InterPro" id="IPR050065">
    <property type="entry name" value="GlmU-like"/>
</dbReference>
<dbReference type="InterPro" id="IPR005835">
    <property type="entry name" value="NTP_transferase_dom"/>
</dbReference>
<dbReference type="InterPro" id="IPR029044">
    <property type="entry name" value="Nucleotide-diphossugar_trans"/>
</dbReference>
<dbReference type="PANTHER" id="PTHR43584">
    <property type="entry name" value="NUCLEOTIDYL TRANSFERASE"/>
    <property type="match status" value="1"/>
</dbReference>
<dbReference type="PANTHER" id="PTHR43584:SF5">
    <property type="entry name" value="PROTEIN LICC"/>
    <property type="match status" value="1"/>
</dbReference>
<dbReference type="Pfam" id="PF00483">
    <property type="entry name" value="NTP_transferase"/>
    <property type="match status" value="1"/>
</dbReference>
<dbReference type="PIRSF" id="PIRSF037382">
    <property type="entry name" value="CCT_LicC"/>
    <property type="match status" value="1"/>
</dbReference>
<dbReference type="SUPFAM" id="SSF53448">
    <property type="entry name" value="Nucleotide-diphospho-sugar transferases"/>
    <property type="match status" value="1"/>
</dbReference>
<gene>
    <name evidence="6 7" type="primary">licC</name>
    <name evidence="14" type="ordered locus">spr1145</name>
</gene>
<keyword id="KW-0002">3D-structure</keyword>
<keyword id="KW-0961">Cell wall biogenesis/degradation</keyword>
<keyword id="KW-0548">Nucleotidyltransferase</keyword>
<keyword id="KW-1185">Reference proteome</keyword>
<keyword id="KW-0777">Teichoic acid biosynthesis</keyword>
<keyword id="KW-0808">Transferase</keyword>
<proteinExistence type="evidence at protein level"/>
<protein>
    <recommendedName>
        <fullName evidence="9">Choline-phosphate cytidylyltransferase</fullName>
        <ecNumber evidence="1 2 3 4 5">2.7.7.15</ecNumber>
    </recommendedName>
    <alternativeName>
        <fullName evidence="6 7">CTP:phosphocholine cytidylyltransferase</fullName>
        <shortName evidence="6 7">CCT</shortName>
    </alternativeName>
    <alternativeName>
        <fullName evidence="8">Spn-LicC</fullName>
    </alternativeName>
</protein>